<evidence type="ECO:0000255" key="1">
    <source>
        <dbReference type="HAMAP-Rule" id="MF_00012"/>
    </source>
</evidence>
<keyword id="KW-0001">2Fe-2S</keyword>
<keyword id="KW-0028">Amino-acid biosynthesis</keyword>
<keyword id="KW-0100">Branched-chain amino acid biosynthesis</keyword>
<keyword id="KW-0408">Iron</keyword>
<keyword id="KW-0411">Iron-sulfur</keyword>
<keyword id="KW-0456">Lyase</keyword>
<keyword id="KW-0460">Magnesium</keyword>
<keyword id="KW-0479">Metal-binding</keyword>
<name>ILVD_YERPB</name>
<feature type="chain" id="PRO_1000089434" description="Dihydroxy-acid dehydratase">
    <location>
        <begin position="1"/>
        <end position="616"/>
    </location>
</feature>
<feature type="active site" description="Proton acceptor" evidence="1">
    <location>
        <position position="517"/>
    </location>
</feature>
<feature type="binding site" evidence="1">
    <location>
        <position position="81"/>
    </location>
    <ligand>
        <name>Mg(2+)</name>
        <dbReference type="ChEBI" id="CHEBI:18420"/>
    </ligand>
</feature>
<feature type="binding site" evidence="1">
    <location>
        <position position="122"/>
    </location>
    <ligand>
        <name>[2Fe-2S] cluster</name>
        <dbReference type="ChEBI" id="CHEBI:190135"/>
    </ligand>
</feature>
<feature type="binding site" evidence="1">
    <location>
        <position position="123"/>
    </location>
    <ligand>
        <name>Mg(2+)</name>
        <dbReference type="ChEBI" id="CHEBI:18420"/>
    </ligand>
</feature>
<feature type="binding site" description="via carbamate group" evidence="1">
    <location>
        <position position="124"/>
    </location>
    <ligand>
        <name>Mg(2+)</name>
        <dbReference type="ChEBI" id="CHEBI:18420"/>
    </ligand>
</feature>
<feature type="binding site" evidence="1">
    <location>
        <position position="195"/>
    </location>
    <ligand>
        <name>[2Fe-2S] cluster</name>
        <dbReference type="ChEBI" id="CHEBI:190135"/>
    </ligand>
</feature>
<feature type="binding site" evidence="1">
    <location>
        <position position="491"/>
    </location>
    <ligand>
        <name>Mg(2+)</name>
        <dbReference type="ChEBI" id="CHEBI:18420"/>
    </ligand>
</feature>
<feature type="modified residue" description="N6-carboxylysine" evidence="1">
    <location>
        <position position="124"/>
    </location>
</feature>
<reference key="1">
    <citation type="submission" date="2008-04" db="EMBL/GenBank/DDBJ databases">
        <title>Complete sequence of Yersinia pseudotuberculosis PB1/+.</title>
        <authorList>
            <person name="Copeland A."/>
            <person name="Lucas S."/>
            <person name="Lapidus A."/>
            <person name="Glavina del Rio T."/>
            <person name="Dalin E."/>
            <person name="Tice H."/>
            <person name="Bruce D."/>
            <person name="Goodwin L."/>
            <person name="Pitluck S."/>
            <person name="Munk A.C."/>
            <person name="Brettin T."/>
            <person name="Detter J.C."/>
            <person name="Han C."/>
            <person name="Tapia R."/>
            <person name="Schmutz J."/>
            <person name="Larimer F."/>
            <person name="Land M."/>
            <person name="Hauser L."/>
            <person name="Challacombe J.F."/>
            <person name="Green L."/>
            <person name="Lindler L.E."/>
            <person name="Nikolich M.P."/>
            <person name="Richardson P."/>
        </authorList>
    </citation>
    <scope>NUCLEOTIDE SEQUENCE [LARGE SCALE GENOMIC DNA]</scope>
    <source>
        <strain>PB1/+</strain>
    </source>
</reference>
<organism>
    <name type="scientific">Yersinia pseudotuberculosis serotype IB (strain PB1/+)</name>
    <dbReference type="NCBI Taxonomy" id="502801"/>
    <lineage>
        <taxon>Bacteria</taxon>
        <taxon>Pseudomonadati</taxon>
        <taxon>Pseudomonadota</taxon>
        <taxon>Gammaproteobacteria</taxon>
        <taxon>Enterobacterales</taxon>
        <taxon>Yersiniaceae</taxon>
        <taxon>Yersinia</taxon>
    </lineage>
</organism>
<comment type="function">
    <text evidence="1">Functions in the biosynthesis of branched-chain amino acids. Catalyzes the dehydration of (2R,3R)-2,3-dihydroxy-3-methylpentanoate (2,3-dihydroxy-3-methylvalerate) into 2-oxo-3-methylpentanoate (2-oxo-3-methylvalerate) and of (2R)-2,3-dihydroxy-3-methylbutanoate (2,3-dihydroxyisovalerate) into 2-oxo-3-methylbutanoate (2-oxoisovalerate), the penultimate precursor to L-isoleucine and L-valine, respectively.</text>
</comment>
<comment type="catalytic activity">
    <reaction evidence="1">
        <text>(2R)-2,3-dihydroxy-3-methylbutanoate = 3-methyl-2-oxobutanoate + H2O</text>
        <dbReference type="Rhea" id="RHEA:24809"/>
        <dbReference type="ChEBI" id="CHEBI:11851"/>
        <dbReference type="ChEBI" id="CHEBI:15377"/>
        <dbReference type="ChEBI" id="CHEBI:49072"/>
        <dbReference type="EC" id="4.2.1.9"/>
    </reaction>
    <physiologicalReaction direction="left-to-right" evidence="1">
        <dbReference type="Rhea" id="RHEA:24810"/>
    </physiologicalReaction>
</comment>
<comment type="catalytic activity">
    <reaction evidence="1">
        <text>(2R,3R)-2,3-dihydroxy-3-methylpentanoate = (S)-3-methyl-2-oxopentanoate + H2O</text>
        <dbReference type="Rhea" id="RHEA:27694"/>
        <dbReference type="ChEBI" id="CHEBI:15377"/>
        <dbReference type="ChEBI" id="CHEBI:35146"/>
        <dbReference type="ChEBI" id="CHEBI:49258"/>
        <dbReference type="EC" id="4.2.1.9"/>
    </reaction>
    <physiologicalReaction direction="left-to-right" evidence="1">
        <dbReference type="Rhea" id="RHEA:27695"/>
    </physiologicalReaction>
</comment>
<comment type="cofactor">
    <cofactor evidence="1">
        <name>[2Fe-2S] cluster</name>
        <dbReference type="ChEBI" id="CHEBI:190135"/>
    </cofactor>
    <text evidence="1">Binds 1 [2Fe-2S] cluster per subunit. This cluster acts as a Lewis acid cofactor.</text>
</comment>
<comment type="cofactor">
    <cofactor evidence="1">
        <name>Mg(2+)</name>
        <dbReference type="ChEBI" id="CHEBI:18420"/>
    </cofactor>
</comment>
<comment type="pathway">
    <text evidence="1">Amino-acid biosynthesis; L-isoleucine biosynthesis; L-isoleucine from 2-oxobutanoate: step 3/4.</text>
</comment>
<comment type="pathway">
    <text evidence="1">Amino-acid biosynthesis; L-valine biosynthesis; L-valine from pyruvate: step 3/4.</text>
</comment>
<comment type="subunit">
    <text evidence="1">Homodimer.</text>
</comment>
<comment type="similarity">
    <text evidence="1">Belongs to the IlvD/Edd family.</text>
</comment>
<proteinExistence type="inferred from homology"/>
<gene>
    <name evidence="1" type="primary">ilvD</name>
    <name type="ordered locus">YPTS_0146</name>
</gene>
<accession>B2JZH0</accession>
<sequence length="616" mass="65499">MPKYRSHTTTHGRNMAGARALWRATGMTDDDFGKPIIAVVNSFTQFVPGHVHLRDLGKLVAEQIVASGGVAKEFNTIAVDDGIAMGHGGMLYSLPSRELIADSVEYMVNAHCADAMVCISNCDKITPGMLMASLRLNIPVIFVSGGPMEAGKTKLSDKIIKLDLIDAMIQGANPNVSDEESAQIERSACPTCGSCSGMFTANSMNCLNEALGLALPGNGSLLATHADRKQLFLDAGKHIVALTKRYYEQDDVSALPRNIANKAAFENAMILDIAMGGSTNTVLHLLAAAQEGEIDFSMTDIDHLSRKVPHLCKVAPSTQKYHMEDVHRAGGVIGILGELDRAGLLNRDVSNVLGLNLTQTLEAYDVMLTQDEGVKQMYAAGPAGIRTTKAFSQDCRYPSLDTDREEGCIRTREHAYSQDGGLAVLYGNIAADGCIVKTAGVDKDSLTFRGPAKVFESQDEAVEAILGGKVVAGDVVVIRYEGPKGGPGMQEMLYPTTYLKSMGLGKSCALLTDGRFSGGTSGLSIGHVSPEAASGGLIGLVQDGDFINIDIPNRGIVLDVSEAELAARRETEEAHGDAAWSPKGRERQVSYALRAYAMLATSADKGAVRDKSKLGG</sequence>
<dbReference type="EC" id="4.2.1.9" evidence="1"/>
<dbReference type="EMBL" id="CP001048">
    <property type="protein sequence ID" value="ACC87143.1"/>
    <property type="molecule type" value="Genomic_DNA"/>
</dbReference>
<dbReference type="RefSeq" id="WP_002212014.1">
    <property type="nucleotide sequence ID" value="NZ_CP009780.1"/>
</dbReference>
<dbReference type="SMR" id="B2JZH0"/>
<dbReference type="GeneID" id="57974808"/>
<dbReference type="KEGG" id="ypb:YPTS_0146"/>
<dbReference type="PATRIC" id="fig|502801.10.peg.3821"/>
<dbReference type="UniPathway" id="UPA00047">
    <property type="reaction ID" value="UER00057"/>
</dbReference>
<dbReference type="UniPathway" id="UPA00049">
    <property type="reaction ID" value="UER00061"/>
</dbReference>
<dbReference type="GO" id="GO:0005829">
    <property type="term" value="C:cytosol"/>
    <property type="evidence" value="ECO:0007669"/>
    <property type="project" value="TreeGrafter"/>
</dbReference>
<dbReference type="GO" id="GO:0051537">
    <property type="term" value="F:2 iron, 2 sulfur cluster binding"/>
    <property type="evidence" value="ECO:0007669"/>
    <property type="project" value="UniProtKB-UniRule"/>
</dbReference>
<dbReference type="GO" id="GO:0004160">
    <property type="term" value="F:dihydroxy-acid dehydratase activity"/>
    <property type="evidence" value="ECO:0007669"/>
    <property type="project" value="UniProtKB-UniRule"/>
</dbReference>
<dbReference type="GO" id="GO:0000287">
    <property type="term" value="F:magnesium ion binding"/>
    <property type="evidence" value="ECO:0007669"/>
    <property type="project" value="UniProtKB-UniRule"/>
</dbReference>
<dbReference type="GO" id="GO:0009097">
    <property type="term" value="P:isoleucine biosynthetic process"/>
    <property type="evidence" value="ECO:0007669"/>
    <property type="project" value="UniProtKB-UniRule"/>
</dbReference>
<dbReference type="GO" id="GO:0009099">
    <property type="term" value="P:L-valine biosynthetic process"/>
    <property type="evidence" value="ECO:0007669"/>
    <property type="project" value="UniProtKB-UniRule"/>
</dbReference>
<dbReference type="FunFam" id="3.50.30.80:FF:000001">
    <property type="entry name" value="Dihydroxy-acid dehydratase"/>
    <property type="match status" value="1"/>
</dbReference>
<dbReference type="Gene3D" id="3.50.30.80">
    <property type="entry name" value="IlvD/EDD C-terminal domain-like"/>
    <property type="match status" value="1"/>
</dbReference>
<dbReference type="HAMAP" id="MF_00012">
    <property type="entry name" value="IlvD"/>
    <property type="match status" value="1"/>
</dbReference>
<dbReference type="InterPro" id="IPR042096">
    <property type="entry name" value="Dihydro-acid_dehy_C"/>
</dbReference>
<dbReference type="InterPro" id="IPR004404">
    <property type="entry name" value="DihydroxyA_deHydtase"/>
</dbReference>
<dbReference type="InterPro" id="IPR020558">
    <property type="entry name" value="DiOHA_6PGluconate_deHydtase_CS"/>
</dbReference>
<dbReference type="InterPro" id="IPR056740">
    <property type="entry name" value="ILV_EDD_C"/>
</dbReference>
<dbReference type="InterPro" id="IPR000581">
    <property type="entry name" value="ILV_EDD_N"/>
</dbReference>
<dbReference type="InterPro" id="IPR037237">
    <property type="entry name" value="IlvD/EDD_N"/>
</dbReference>
<dbReference type="NCBIfam" id="TIGR00110">
    <property type="entry name" value="ilvD"/>
    <property type="match status" value="1"/>
</dbReference>
<dbReference type="NCBIfam" id="NF009103">
    <property type="entry name" value="PRK12448.1"/>
    <property type="match status" value="1"/>
</dbReference>
<dbReference type="PANTHER" id="PTHR43661">
    <property type="entry name" value="D-XYLONATE DEHYDRATASE"/>
    <property type="match status" value="1"/>
</dbReference>
<dbReference type="PANTHER" id="PTHR43661:SF3">
    <property type="entry name" value="D-XYLONATE DEHYDRATASE YAGF-RELATED"/>
    <property type="match status" value="1"/>
</dbReference>
<dbReference type="Pfam" id="PF24877">
    <property type="entry name" value="ILV_EDD_C"/>
    <property type="match status" value="1"/>
</dbReference>
<dbReference type="Pfam" id="PF00920">
    <property type="entry name" value="ILVD_EDD_N"/>
    <property type="match status" value="1"/>
</dbReference>
<dbReference type="SUPFAM" id="SSF143975">
    <property type="entry name" value="IlvD/EDD N-terminal domain-like"/>
    <property type="match status" value="1"/>
</dbReference>
<dbReference type="SUPFAM" id="SSF52016">
    <property type="entry name" value="LeuD/IlvD-like"/>
    <property type="match status" value="1"/>
</dbReference>
<dbReference type="PROSITE" id="PS00886">
    <property type="entry name" value="ILVD_EDD_1"/>
    <property type="match status" value="1"/>
</dbReference>
<dbReference type="PROSITE" id="PS00887">
    <property type="entry name" value="ILVD_EDD_2"/>
    <property type="match status" value="1"/>
</dbReference>
<protein>
    <recommendedName>
        <fullName evidence="1">Dihydroxy-acid dehydratase</fullName>
        <shortName evidence="1">DAD</shortName>
        <ecNumber evidence="1">4.2.1.9</ecNumber>
    </recommendedName>
</protein>